<comment type="catalytic activity">
    <reaction evidence="1">
        <text>N-(5-phospho-beta-D-ribosyl)anthranilate = 1-(2-carboxyphenylamino)-1-deoxy-D-ribulose 5-phosphate</text>
        <dbReference type="Rhea" id="RHEA:21540"/>
        <dbReference type="ChEBI" id="CHEBI:18277"/>
        <dbReference type="ChEBI" id="CHEBI:58613"/>
        <dbReference type="EC" id="5.3.1.24"/>
    </reaction>
</comment>
<comment type="pathway">
    <text evidence="1">Amino-acid biosynthesis; L-tryptophan biosynthesis; L-tryptophan from chorismate: step 3/5.</text>
</comment>
<comment type="similarity">
    <text evidence="1">Belongs to the TrpF family.</text>
</comment>
<name>TRPF_STRM5</name>
<organism>
    <name type="scientific">Stenotrophomonas maltophilia (strain R551-3)</name>
    <dbReference type="NCBI Taxonomy" id="391008"/>
    <lineage>
        <taxon>Bacteria</taxon>
        <taxon>Pseudomonadati</taxon>
        <taxon>Pseudomonadota</taxon>
        <taxon>Gammaproteobacteria</taxon>
        <taxon>Lysobacterales</taxon>
        <taxon>Lysobacteraceae</taxon>
        <taxon>Stenotrophomonas</taxon>
        <taxon>Stenotrophomonas maltophilia group</taxon>
    </lineage>
</organism>
<sequence>MSRSYYRTRIKFCGMTRAGDVRLAGELGVDAVGFIFARESSRRVAPAEARAMRQAIAPMVDVVALFRNNSKEEVREVLRTVRPTLLQFHGEEDESFCRSFNMPYLKAIAMGGREEVNARTLQLRYPSAAGFLFDSHAPGGGGGTGVAFDWSRVPTGLHRPFLLAGGLNPENVYDAVLATLPWGVDVSSGIELEPGIKDGYRMRTFVEEVRRADCTVLE</sequence>
<gene>
    <name evidence="1" type="primary">trpF</name>
    <name type="ordered locus">Smal_2850</name>
</gene>
<dbReference type="EC" id="5.3.1.24" evidence="1"/>
<dbReference type="EMBL" id="CP001111">
    <property type="protein sequence ID" value="ACF52550.1"/>
    <property type="molecule type" value="Genomic_DNA"/>
</dbReference>
<dbReference type="RefSeq" id="WP_006381350.1">
    <property type="nucleotide sequence ID" value="NC_011071.1"/>
</dbReference>
<dbReference type="SMR" id="B4SQV5"/>
<dbReference type="STRING" id="391008.Smal_2850"/>
<dbReference type="KEGG" id="smt:Smal_2850"/>
<dbReference type="eggNOG" id="COG0135">
    <property type="taxonomic scope" value="Bacteria"/>
</dbReference>
<dbReference type="HOGENOM" id="CLU_076364_2_0_6"/>
<dbReference type="OrthoDB" id="9796196at2"/>
<dbReference type="UniPathway" id="UPA00035">
    <property type="reaction ID" value="UER00042"/>
</dbReference>
<dbReference type="Proteomes" id="UP000001867">
    <property type="component" value="Chromosome"/>
</dbReference>
<dbReference type="GO" id="GO:0004640">
    <property type="term" value="F:phosphoribosylanthranilate isomerase activity"/>
    <property type="evidence" value="ECO:0007669"/>
    <property type="project" value="UniProtKB-UniRule"/>
</dbReference>
<dbReference type="GO" id="GO:0000162">
    <property type="term" value="P:L-tryptophan biosynthetic process"/>
    <property type="evidence" value="ECO:0007669"/>
    <property type="project" value="UniProtKB-UniRule"/>
</dbReference>
<dbReference type="CDD" id="cd00405">
    <property type="entry name" value="PRAI"/>
    <property type="match status" value="1"/>
</dbReference>
<dbReference type="Gene3D" id="3.20.20.70">
    <property type="entry name" value="Aldolase class I"/>
    <property type="match status" value="1"/>
</dbReference>
<dbReference type="HAMAP" id="MF_00135">
    <property type="entry name" value="PRAI"/>
    <property type="match status" value="1"/>
</dbReference>
<dbReference type="InterPro" id="IPR013785">
    <property type="entry name" value="Aldolase_TIM"/>
</dbReference>
<dbReference type="InterPro" id="IPR001240">
    <property type="entry name" value="PRAI_dom"/>
</dbReference>
<dbReference type="InterPro" id="IPR011060">
    <property type="entry name" value="RibuloseP-bd_barrel"/>
</dbReference>
<dbReference type="InterPro" id="IPR044643">
    <property type="entry name" value="TrpF_fam"/>
</dbReference>
<dbReference type="NCBIfam" id="NF002296">
    <property type="entry name" value="PRK01222.1-2"/>
    <property type="match status" value="1"/>
</dbReference>
<dbReference type="NCBIfam" id="NF002298">
    <property type="entry name" value="PRK01222.1-4"/>
    <property type="match status" value="1"/>
</dbReference>
<dbReference type="PANTHER" id="PTHR42894">
    <property type="entry name" value="N-(5'-PHOSPHORIBOSYL)ANTHRANILATE ISOMERASE"/>
    <property type="match status" value="1"/>
</dbReference>
<dbReference type="PANTHER" id="PTHR42894:SF1">
    <property type="entry name" value="N-(5'-PHOSPHORIBOSYL)ANTHRANILATE ISOMERASE"/>
    <property type="match status" value="1"/>
</dbReference>
<dbReference type="Pfam" id="PF00697">
    <property type="entry name" value="PRAI"/>
    <property type="match status" value="1"/>
</dbReference>
<dbReference type="SUPFAM" id="SSF51366">
    <property type="entry name" value="Ribulose-phoshate binding barrel"/>
    <property type="match status" value="1"/>
</dbReference>
<proteinExistence type="inferred from homology"/>
<accession>B4SQV5</accession>
<evidence type="ECO:0000255" key="1">
    <source>
        <dbReference type="HAMAP-Rule" id="MF_00135"/>
    </source>
</evidence>
<reference key="1">
    <citation type="submission" date="2008-06" db="EMBL/GenBank/DDBJ databases">
        <title>Complete sequence of Stenotrophomonas maltophilia R551-3.</title>
        <authorList>
            <consortium name="US DOE Joint Genome Institute"/>
            <person name="Lucas S."/>
            <person name="Copeland A."/>
            <person name="Lapidus A."/>
            <person name="Glavina del Rio T."/>
            <person name="Dalin E."/>
            <person name="Tice H."/>
            <person name="Pitluck S."/>
            <person name="Chain P."/>
            <person name="Malfatti S."/>
            <person name="Shin M."/>
            <person name="Vergez L."/>
            <person name="Lang D."/>
            <person name="Schmutz J."/>
            <person name="Larimer F."/>
            <person name="Land M."/>
            <person name="Hauser L."/>
            <person name="Kyrpides N."/>
            <person name="Mikhailova N."/>
            <person name="Taghavi S."/>
            <person name="Monchy S."/>
            <person name="Newman L."/>
            <person name="Vangronsveld J."/>
            <person name="van der Lelie D."/>
            <person name="Richardson P."/>
        </authorList>
    </citation>
    <scope>NUCLEOTIDE SEQUENCE [LARGE SCALE GENOMIC DNA]</scope>
    <source>
        <strain>R551-3</strain>
    </source>
</reference>
<feature type="chain" id="PRO_1000095940" description="N-(5'-phosphoribosyl)anthranilate isomerase">
    <location>
        <begin position="1"/>
        <end position="218"/>
    </location>
</feature>
<keyword id="KW-0028">Amino-acid biosynthesis</keyword>
<keyword id="KW-0057">Aromatic amino acid biosynthesis</keyword>
<keyword id="KW-0413">Isomerase</keyword>
<keyword id="KW-0822">Tryptophan biosynthesis</keyword>
<protein>
    <recommendedName>
        <fullName evidence="1">N-(5'-phosphoribosyl)anthranilate isomerase</fullName>
        <shortName evidence="1">PRAI</shortName>
        <ecNumber evidence="1">5.3.1.24</ecNumber>
    </recommendedName>
</protein>